<sequence>MSQGKIVQIIGAVIDVEFPRDAMPKVYDALKLVDADLTLEVQQQLGDGVVRTIAMGSSDGLKRGMAVANTGAPISVPVGAATLGRIMDVLGNPVDEAGPVATDARRAIHQAAPKFDELSAAADILETGIKVIDLLCPFAKGGKVGLFGGAGVGKTVNMMELINNIAKAHSGLSVFAGVGERTREGNDFYHEMKDSNVLDKVAMVYGQMNEPPGNRLRVALTGLTMAEHFRDEKDENGKGRDVLLFVDNIYRYTLAGTEVSALLGRMPSAVGYQPTLAEEMGRLQERITSTKDGSITSIQAVYVPADDLTDPSPATTFAHLDATVVLSRDIASLGIYPAVDPLDSTSRQLDPLVVGDEHYTVARGVQSTLQRYKELRDIIAILGMDELSEEDKLVVARARKIQRFLSQPFHVAEVFTGSPGKYVPLRETIKGFKAILAGEYDHLPEQAFYMVGAIEEAAEKAKTLN</sequence>
<feature type="chain" id="PRO_0000254241" description="ATP synthase subunit beta">
    <location>
        <begin position="1"/>
        <end position="465"/>
    </location>
</feature>
<feature type="binding site" evidence="1">
    <location>
        <begin position="148"/>
        <end position="155"/>
    </location>
    <ligand>
        <name>ATP</name>
        <dbReference type="ChEBI" id="CHEBI:30616"/>
    </ligand>
</feature>
<keyword id="KW-0066">ATP synthesis</keyword>
<keyword id="KW-0067">ATP-binding</keyword>
<keyword id="KW-0997">Cell inner membrane</keyword>
<keyword id="KW-1003">Cell membrane</keyword>
<keyword id="KW-0139">CF(1)</keyword>
<keyword id="KW-0375">Hydrogen ion transport</keyword>
<keyword id="KW-0406">Ion transport</keyword>
<keyword id="KW-0472">Membrane</keyword>
<keyword id="KW-0547">Nucleotide-binding</keyword>
<keyword id="KW-1185">Reference proteome</keyword>
<keyword id="KW-1278">Translocase</keyword>
<keyword id="KW-0813">Transport</keyword>
<accession>Q7P095</accession>
<proteinExistence type="inferred from homology"/>
<dbReference type="EC" id="7.1.2.2" evidence="1"/>
<dbReference type="EMBL" id="AE016825">
    <property type="protein sequence ID" value="AAQ58348.1"/>
    <property type="molecule type" value="Genomic_DNA"/>
</dbReference>
<dbReference type="RefSeq" id="WP_011134227.1">
    <property type="nucleotide sequence ID" value="NC_005085.1"/>
</dbReference>
<dbReference type="SMR" id="Q7P095"/>
<dbReference type="STRING" id="243365.CV_0672"/>
<dbReference type="GeneID" id="66365434"/>
<dbReference type="KEGG" id="cvi:CV_0672"/>
<dbReference type="eggNOG" id="COG0055">
    <property type="taxonomic scope" value="Bacteria"/>
</dbReference>
<dbReference type="HOGENOM" id="CLU_022398_0_2_4"/>
<dbReference type="OrthoDB" id="9801639at2"/>
<dbReference type="Proteomes" id="UP000001424">
    <property type="component" value="Chromosome"/>
</dbReference>
<dbReference type="GO" id="GO:0005886">
    <property type="term" value="C:plasma membrane"/>
    <property type="evidence" value="ECO:0007669"/>
    <property type="project" value="UniProtKB-SubCell"/>
</dbReference>
<dbReference type="GO" id="GO:0045259">
    <property type="term" value="C:proton-transporting ATP synthase complex"/>
    <property type="evidence" value="ECO:0007669"/>
    <property type="project" value="UniProtKB-KW"/>
</dbReference>
<dbReference type="GO" id="GO:0005524">
    <property type="term" value="F:ATP binding"/>
    <property type="evidence" value="ECO:0007669"/>
    <property type="project" value="UniProtKB-UniRule"/>
</dbReference>
<dbReference type="GO" id="GO:0016887">
    <property type="term" value="F:ATP hydrolysis activity"/>
    <property type="evidence" value="ECO:0007669"/>
    <property type="project" value="InterPro"/>
</dbReference>
<dbReference type="GO" id="GO:0046933">
    <property type="term" value="F:proton-transporting ATP synthase activity, rotational mechanism"/>
    <property type="evidence" value="ECO:0007669"/>
    <property type="project" value="UniProtKB-UniRule"/>
</dbReference>
<dbReference type="CDD" id="cd18110">
    <property type="entry name" value="ATP-synt_F1_beta_C"/>
    <property type="match status" value="1"/>
</dbReference>
<dbReference type="CDD" id="cd18115">
    <property type="entry name" value="ATP-synt_F1_beta_N"/>
    <property type="match status" value="1"/>
</dbReference>
<dbReference type="CDD" id="cd01133">
    <property type="entry name" value="F1-ATPase_beta_CD"/>
    <property type="match status" value="1"/>
</dbReference>
<dbReference type="FunFam" id="1.10.1140.10:FF:000001">
    <property type="entry name" value="ATP synthase subunit beta"/>
    <property type="match status" value="1"/>
</dbReference>
<dbReference type="FunFam" id="2.40.10.170:FF:000003">
    <property type="entry name" value="ATP synthase subunit beta"/>
    <property type="match status" value="1"/>
</dbReference>
<dbReference type="FunFam" id="3.40.50.300:FF:000004">
    <property type="entry name" value="ATP synthase subunit beta"/>
    <property type="match status" value="1"/>
</dbReference>
<dbReference type="Gene3D" id="2.40.10.170">
    <property type="match status" value="1"/>
</dbReference>
<dbReference type="Gene3D" id="1.10.1140.10">
    <property type="entry name" value="Bovine Mitochondrial F1-atpase, Atp Synthase Beta Chain, Chain D, domain 3"/>
    <property type="match status" value="1"/>
</dbReference>
<dbReference type="Gene3D" id="3.40.50.300">
    <property type="entry name" value="P-loop containing nucleotide triphosphate hydrolases"/>
    <property type="match status" value="1"/>
</dbReference>
<dbReference type="HAMAP" id="MF_01347">
    <property type="entry name" value="ATP_synth_beta_bact"/>
    <property type="match status" value="1"/>
</dbReference>
<dbReference type="InterPro" id="IPR003593">
    <property type="entry name" value="AAA+_ATPase"/>
</dbReference>
<dbReference type="InterPro" id="IPR055190">
    <property type="entry name" value="ATP-synt_VA_C"/>
</dbReference>
<dbReference type="InterPro" id="IPR005722">
    <property type="entry name" value="ATP_synth_F1_bsu"/>
</dbReference>
<dbReference type="InterPro" id="IPR020003">
    <property type="entry name" value="ATPase_a/bsu_AS"/>
</dbReference>
<dbReference type="InterPro" id="IPR050053">
    <property type="entry name" value="ATPase_alpha/beta_chains"/>
</dbReference>
<dbReference type="InterPro" id="IPR004100">
    <property type="entry name" value="ATPase_F1/V1/A1_a/bsu_N"/>
</dbReference>
<dbReference type="InterPro" id="IPR036121">
    <property type="entry name" value="ATPase_F1/V1/A1_a/bsu_N_sf"/>
</dbReference>
<dbReference type="InterPro" id="IPR000194">
    <property type="entry name" value="ATPase_F1/V1/A1_a/bsu_nucl-bd"/>
</dbReference>
<dbReference type="InterPro" id="IPR024034">
    <property type="entry name" value="ATPase_F1/V1_b/a_C"/>
</dbReference>
<dbReference type="InterPro" id="IPR027417">
    <property type="entry name" value="P-loop_NTPase"/>
</dbReference>
<dbReference type="NCBIfam" id="TIGR01039">
    <property type="entry name" value="atpD"/>
    <property type="match status" value="1"/>
</dbReference>
<dbReference type="PANTHER" id="PTHR15184">
    <property type="entry name" value="ATP SYNTHASE"/>
    <property type="match status" value="1"/>
</dbReference>
<dbReference type="PANTHER" id="PTHR15184:SF71">
    <property type="entry name" value="ATP SYNTHASE SUBUNIT BETA, MITOCHONDRIAL"/>
    <property type="match status" value="1"/>
</dbReference>
<dbReference type="Pfam" id="PF00006">
    <property type="entry name" value="ATP-synt_ab"/>
    <property type="match status" value="1"/>
</dbReference>
<dbReference type="Pfam" id="PF02874">
    <property type="entry name" value="ATP-synt_ab_N"/>
    <property type="match status" value="1"/>
</dbReference>
<dbReference type="Pfam" id="PF22919">
    <property type="entry name" value="ATP-synt_VA_C"/>
    <property type="match status" value="1"/>
</dbReference>
<dbReference type="SMART" id="SM00382">
    <property type="entry name" value="AAA"/>
    <property type="match status" value="1"/>
</dbReference>
<dbReference type="SUPFAM" id="SSF47917">
    <property type="entry name" value="C-terminal domain of alpha and beta subunits of F1 ATP synthase"/>
    <property type="match status" value="1"/>
</dbReference>
<dbReference type="SUPFAM" id="SSF50615">
    <property type="entry name" value="N-terminal domain of alpha and beta subunits of F1 ATP synthase"/>
    <property type="match status" value="1"/>
</dbReference>
<dbReference type="SUPFAM" id="SSF52540">
    <property type="entry name" value="P-loop containing nucleoside triphosphate hydrolases"/>
    <property type="match status" value="1"/>
</dbReference>
<dbReference type="PROSITE" id="PS00152">
    <property type="entry name" value="ATPASE_ALPHA_BETA"/>
    <property type="match status" value="1"/>
</dbReference>
<organism>
    <name type="scientific">Chromobacterium violaceum (strain ATCC 12472 / DSM 30191 / JCM 1249 / CCUG 213 / NBRC 12614 / NCIMB 9131 / NCTC 9757 / MK)</name>
    <dbReference type="NCBI Taxonomy" id="243365"/>
    <lineage>
        <taxon>Bacteria</taxon>
        <taxon>Pseudomonadati</taxon>
        <taxon>Pseudomonadota</taxon>
        <taxon>Betaproteobacteria</taxon>
        <taxon>Neisseriales</taxon>
        <taxon>Chromobacteriaceae</taxon>
        <taxon>Chromobacterium</taxon>
    </lineage>
</organism>
<name>ATPB_CHRVO</name>
<evidence type="ECO:0000255" key="1">
    <source>
        <dbReference type="HAMAP-Rule" id="MF_01347"/>
    </source>
</evidence>
<reference key="1">
    <citation type="journal article" date="2003" name="Proc. Natl. Acad. Sci. U.S.A.">
        <title>The complete genome sequence of Chromobacterium violaceum reveals remarkable and exploitable bacterial adaptability.</title>
        <authorList>
            <person name="Vasconcelos A.T.R."/>
            <person name="de Almeida D.F."/>
            <person name="Hungria M."/>
            <person name="Guimaraes C.T."/>
            <person name="Antonio R.V."/>
            <person name="Almeida F.C."/>
            <person name="de Almeida L.G.P."/>
            <person name="de Almeida R."/>
            <person name="Alves-Gomes J.A."/>
            <person name="Andrade E.M."/>
            <person name="Araripe J."/>
            <person name="de Araujo M.F.F."/>
            <person name="Astolfi-Filho S."/>
            <person name="Azevedo V."/>
            <person name="Baptista A.J."/>
            <person name="Bataus L.A.M."/>
            <person name="Batista J.S."/>
            <person name="Belo A."/>
            <person name="van den Berg C."/>
            <person name="Bogo M."/>
            <person name="Bonatto S."/>
            <person name="Bordignon J."/>
            <person name="Brigido M.M."/>
            <person name="Brito C.A."/>
            <person name="Brocchi M."/>
            <person name="Burity H.A."/>
            <person name="Camargo A.A."/>
            <person name="Cardoso D.D.P."/>
            <person name="Carneiro N.P."/>
            <person name="Carraro D.M."/>
            <person name="Carvalho C.M.B."/>
            <person name="Cascardo J.C.M."/>
            <person name="Cavada B.S."/>
            <person name="Chueire L.M.O."/>
            <person name="Creczynski-Pasa T.B."/>
            <person name="Cunha-Junior N.C."/>
            <person name="Fagundes N."/>
            <person name="Falcao C.L."/>
            <person name="Fantinatti F."/>
            <person name="Farias I.P."/>
            <person name="Felipe M.S.S."/>
            <person name="Ferrari L.P."/>
            <person name="Ferro J.A."/>
            <person name="Ferro M.I.T."/>
            <person name="Franco G.R."/>
            <person name="Freitas N.S.A."/>
            <person name="Furlan L.R."/>
            <person name="Gazzinelli R.T."/>
            <person name="Gomes E.A."/>
            <person name="Goncalves P.R."/>
            <person name="Grangeiro T.B."/>
            <person name="Grattapaglia D."/>
            <person name="Grisard E.C."/>
            <person name="Hanna E.S."/>
            <person name="Jardim S.N."/>
            <person name="Laurino J."/>
            <person name="Leoi L.C.T."/>
            <person name="Lima L.F.A."/>
            <person name="Loureiro M.F."/>
            <person name="Lyra M.C.C.P."/>
            <person name="Madeira H.M.F."/>
            <person name="Manfio G.P."/>
            <person name="Maranhao A.Q."/>
            <person name="Martins W.S."/>
            <person name="di Mauro S.M.Z."/>
            <person name="de Medeiros S.R.B."/>
            <person name="Meissner R.V."/>
            <person name="Moreira M.A.M."/>
            <person name="Nascimento F.F."/>
            <person name="Nicolas M.F."/>
            <person name="Oliveira J.G."/>
            <person name="Oliveira S.C."/>
            <person name="Paixao R.F.C."/>
            <person name="Parente J.A."/>
            <person name="Pedrosa F.O."/>
            <person name="Pena S.D.J."/>
            <person name="Pereira J.O."/>
            <person name="Pereira M."/>
            <person name="Pinto L.S.R.C."/>
            <person name="Pinto L.S."/>
            <person name="Porto J.I.R."/>
            <person name="Potrich D.P."/>
            <person name="Ramalho-Neto C.E."/>
            <person name="Reis A.M.M."/>
            <person name="Rigo L.U."/>
            <person name="Rondinelli E."/>
            <person name="Santos E.B.P."/>
            <person name="Santos F.R."/>
            <person name="Schneider M.P.C."/>
            <person name="Seuanez H.N."/>
            <person name="Silva A.M.R."/>
            <person name="da Silva A.L.C."/>
            <person name="Silva D.W."/>
            <person name="Silva R."/>
            <person name="Simoes I.C."/>
            <person name="Simon D."/>
            <person name="Soares C.M.A."/>
            <person name="Soares R.B.A."/>
            <person name="Souza E.M."/>
            <person name="Souza K.R.L."/>
            <person name="Souza R.C."/>
            <person name="Steffens M.B.R."/>
            <person name="Steindel M."/>
            <person name="Teixeira S.R."/>
            <person name="Urmenyi T."/>
            <person name="Vettore A."/>
            <person name="Wassem R."/>
            <person name="Zaha A."/>
            <person name="Simpson A.J.G."/>
        </authorList>
    </citation>
    <scope>NUCLEOTIDE SEQUENCE [LARGE SCALE GENOMIC DNA]</scope>
    <source>
        <strain>ATCC 12472 / DSM 30191 / JCM 1249 / CCUG 213 / NBRC 12614 / NCIMB 9131 / NCTC 9757 / MK</strain>
    </source>
</reference>
<protein>
    <recommendedName>
        <fullName evidence="1">ATP synthase subunit beta</fullName>
        <ecNumber evidence="1">7.1.2.2</ecNumber>
    </recommendedName>
    <alternativeName>
        <fullName evidence="1">ATP synthase F1 sector subunit beta</fullName>
    </alternativeName>
    <alternativeName>
        <fullName evidence="1">F-ATPase subunit beta</fullName>
    </alternativeName>
</protein>
<comment type="function">
    <text evidence="1">Produces ATP from ADP in the presence of a proton gradient across the membrane. The catalytic sites are hosted primarily by the beta subunits.</text>
</comment>
<comment type="catalytic activity">
    <reaction evidence="1">
        <text>ATP + H2O + 4 H(+)(in) = ADP + phosphate + 5 H(+)(out)</text>
        <dbReference type="Rhea" id="RHEA:57720"/>
        <dbReference type="ChEBI" id="CHEBI:15377"/>
        <dbReference type="ChEBI" id="CHEBI:15378"/>
        <dbReference type="ChEBI" id="CHEBI:30616"/>
        <dbReference type="ChEBI" id="CHEBI:43474"/>
        <dbReference type="ChEBI" id="CHEBI:456216"/>
        <dbReference type="EC" id="7.1.2.2"/>
    </reaction>
</comment>
<comment type="subunit">
    <text evidence="1">F-type ATPases have 2 components, CF(1) - the catalytic core - and CF(0) - the membrane proton channel. CF(1) has five subunits: alpha(3), beta(3), gamma(1), delta(1), epsilon(1). CF(0) has three main subunits: a(1), b(2) and c(9-12). The alpha and beta chains form an alternating ring which encloses part of the gamma chain. CF(1) is attached to CF(0) by a central stalk formed by the gamma and epsilon chains, while a peripheral stalk is formed by the delta and b chains.</text>
</comment>
<comment type="subcellular location">
    <subcellularLocation>
        <location evidence="1">Cell inner membrane</location>
        <topology evidence="1">Peripheral membrane protein</topology>
    </subcellularLocation>
</comment>
<comment type="similarity">
    <text evidence="1">Belongs to the ATPase alpha/beta chains family.</text>
</comment>
<gene>
    <name evidence="1" type="primary">atpD</name>
    <name type="ordered locus">CV_0672</name>
</gene>